<feature type="chain" id="PRO_0000321746" description="Ribosome maturation factor RimM">
    <location>
        <begin position="1"/>
        <end position="176"/>
    </location>
</feature>
<feature type="domain" description="PRC barrel" evidence="1">
    <location>
        <begin position="97"/>
        <end position="176"/>
    </location>
</feature>
<name>RIMM_PSEA6</name>
<sequence>MSHASDTLVMGKIGAPYGVKGWVKITSYTDELDGIFSYTPWLVGQEGNTKEIVVDQWRTHNKGLVAKLVGVETRDDAESIKNLDISIKAQQLPQLDGDEFYWRELVGMQVVTEQGYNLGVVKELFETGANDVMLIKANLKDAFGQKERMVPYLIDQVVKKVDREAKTIQVDWDPSF</sequence>
<organism>
    <name type="scientific">Pseudoalteromonas atlantica (strain T6c / ATCC BAA-1087)</name>
    <dbReference type="NCBI Taxonomy" id="3042615"/>
    <lineage>
        <taxon>Bacteria</taxon>
        <taxon>Pseudomonadati</taxon>
        <taxon>Pseudomonadota</taxon>
        <taxon>Gammaproteobacteria</taxon>
        <taxon>Alteromonadales</taxon>
        <taxon>Alteromonadaceae</taxon>
        <taxon>Paraglaciecola</taxon>
    </lineage>
</organism>
<reference key="1">
    <citation type="submission" date="2006-06" db="EMBL/GenBank/DDBJ databases">
        <title>Complete sequence of Pseudoalteromonas atlantica T6c.</title>
        <authorList>
            <consortium name="US DOE Joint Genome Institute"/>
            <person name="Copeland A."/>
            <person name="Lucas S."/>
            <person name="Lapidus A."/>
            <person name="Barry K."/>
            <person name="Detter J.C."/>
            <person name="Glavina del Rio T."/>
            <person name="Hammon N."/>
            <person name="Israni S."/>
            <person name="Dalin E."/>
            <person name="Tice H."/>
            <person name="Pitluck S."/>
            <person name="Saunders E."/>
            <person name="Brettin T."/>
            <person name="Bruce D."/>
            <person name="Han C."/>
            <person name="Tapia R."/>
            <person name="Gilna P."/>
            <person name="Schmutz J."/>
            <person name="Larimer F."/>
            <person name="Land M."/>
            <person name="Hauser L."/>
            <person name="Kyrpides N."/>
            <person name="Kim E."/>
            <person name="Karls A.C."/>
            <person name="Bartlett D."/>
            <person name="Higgins B.P."/>
            <person name="Richardson P."/>
        </authorList>
    </citation>
    <scope>NUCLEOTIDE SEQUENCE [LARGE SCALE GENOMIC DNA]</scope>
    <source>
        <strain>T6c / ATCC BAA-1087</strain>
    </source>
</reference>
<comment type="function">
    <text evidence="1">An accessory protein needed during the final step in the assembly of 30S ribosomal subunit, possibly for assembly of the head region. Essential for efficient processing of 16S rRNA. May be needed both before and after RbfA during the maturation of 16S rRNA. It has affinity for free ribosomal 30S subunits but not for 70S ribosomes.</text>
</comment>
<comment type="subunit">
    <text evidence="1">Binds ribosomal protein uS19.</text>
</comment>
<comment type="subcellular location">
    <subcellularLocation>
        <location evidence="1">Cytoplasm</location>
    </subcellularLocation>
</comment>
<comment type="domain">
    <text evidence="1">The PRC barrel domain binds ribosomal protein uS19.</text>
</comment>
<comment type="similarity">
    <text evidence="1">Belongs to the RimM family.</text>
</comment>
<gene>
    <name evidence="1" type="primary">rimM</name>
    <name type="ordered locus">Patl_1578</name>
</gene>
<proteinExistence type="inferred from homology"/>
<protein>
    <recommendedName>
        <fullName evidence="1">Ribosome maturation factor RimM</fullName>
    </recommendedName>
</protein>
<evidence type="ECO:0000255" key="1">
    <source>
        <dbReference type="HAMAP-Rule" id="MF_00014"/>
    </source>
</evidence>
<keyword id="KW-0143">Chaperone</keyword>
<keyword id="KW-0963">Cytoplasm</keyword>
<keyword id="KW-0690">Ribosome biogenesis</keyword>
<keyword id="KW-0698">rRNA processing</keyword>
<accession>Q15VI8</accession>
<dbReference type="EMBL" id="CP000388">
    <property type="protein sequence ID" value="ABG40100.1"/>
    <property type="molecule type" value="Genomic_DNA"/>
</dbReference>
<dbReference type="RefSeq" id="WP_006994622.1">
    <property type="nucleotide sequence ID" value="NC_008228.1"/>
</dbReference>
<dbReference type="SMR" id="Q15VI8"/>
<dbReference type="STRING" id="342610.Patl_1578"/>
<dbReference type="KEGG" id="pat:Patl_1578"/>
<dbReference type="eggNOG" id="COG0806">
    <property type="taxonomic scope" value="Bacteria"/>
</dbReference>
<dbReference type="HOGENOM" id="CLU_077636_1_0_6"/>
<dbReference type="OrthoDB" id="9783509at2"/>
<dbReference type="Proteomes" id="UP000001981">
    <property type="component" value="Chromosome"/>
</dbReference>
<dbReference type="GO" id="GO:0005737">
    <property type="term" value="C:cytoplasm"/>
    <property type="evidence" value="ECO:0007669"/>
    <property type="project" value="UniProtKB-SubCell"/>
</dbReference>
<dbReference type="GO" id="GO:0005840">
    <property type="term" value="C:ribosome"/>
    <property type="evidence" value="ECO:0007669"/>
    <property type="project" value="InterPro"/>
</dbReference>
<dbReference type="GO" id="GO:0043022">
    <property type="term" value="F:ribosome binding"/>
    <property type="evidence" value="ECO:0007669"/>
    <property type="project" value="InterPro"/>
</dbReference>
<dbReference type="GO" id="GO:0042274">
    <property type="term" value="P:ribosomal small subunit biogenesis"/>
    <property type="evidence" value="ECO:0007669"/>
    <property type="project" value="UniProtKB-UniRule"/>
</dbReference>
<dbReference type="GO" id="GO:0006364">
    <property type="term" value="P:rRNA processing"/>
    <property type="evidence" value="ECO:0007669"/>
    <property type="project" value="UniProtKB-UniRule"/>
</dbReference>
<dbReference type="Gene3D" id="2.30.30.240">
    <property type="entry name" value="PRC-barrel domain"/>
    <property type="match status" value="1"/>
</dbReference>
<dbReference type="Gene3D" id="2.40.30.60">
    <property type="entry name" value="RimM"/>
    <property type="match status" value="1"/>
</dbReference>
<dbReference type="HAMAP" id="MF_00014">
    <property type="entry name" value="Ribosome_mat_RimM"/>
    <property type="match status" value="1"/>
</dbReference>
<dbReference type="InterPro" id="IPR027275">
    <property type="entry name" value="PRC-brl_dom"/>
</dbReference>
<dbReference type="InterPro" id="IPR011033">
    <property type="entry name" value="PRC_barrel-like_sf"/>
</dbReference>
<dbReference type="InterPro" id="IPR011961">
    <property type="entry name" value="RimM"/>
</dbReference>
<dbReference type="InterPro" id="IPR002676">
    <property type="entry name" value="RimM_N"/>
</dbReference>
<dbReference type="InterPro" id="IPR036976">
    <property type="entry name" value="RimM_N_sf"/>
</dbReference>
<dbReference type="InterPro" id="IPR009000">
    <property type="entry name" value="Transl_B-barrel_sf"/>
</dbReference>
<dbReference type="NCBIfam" id="TIGR02273">
    <property type="entry name" value="16S_RimM"/>
    <property type="match status" value="1"/>
</dbReference>
<dbReference type="PANTHER" id="PTHR33692">
    <property type="entry name" value="RIBOSOME MATURATION FACTOR RIMM"/>
    <property type="match status" value="1"/>
</dbReference>
<dbReference type="PANTHER" id="PTHR33692:SF1">
    <property type="entry name" value="RIBOSOME MATURATION FACTOR RIMM"/>
    <property type="match status" value="1"/>
</dbReference>
<dbReference type="Pfam" id="PF05239">
    <property type="entry name" value="PRC"/>
    <property type="match status" value="1"/>
</dbReference>
<dbReference type="Pfam" id="PF01782">
    <property type="entry name" value="RimM"/>
    <property type="match status" value="1"/>
</dbReference>
<dbReference type="SUPFAM" id="SSF50346">
    <property type="entry name" value="PRC-barrel domain"/>
    <property type="match status" value="1"/>
</dbReference>
<dbReference type="SUPFAM" id="SSF50447">
    <property type="entry name" value="Translation proteins"/>
    <property type="match status" value="1"/>
</dbReference>